<proteinExistence type="inferred from homology"/>
<reference key="1">
    <citation type="journal article" date="2009" name="Genome Biol.">
        <title>Genomic and genetic analyses of diversity and plant interactions of Pseudomonas fluorescens.</title>
        <authorList>
            <person name="Silby M.W."/>
            <person name="Cerdeno-Tarraga A.M."/>
            <person name="Vernikos G.S."/>
            <person name="Giddens S.R."/>
            <person name="Jackson R.W."/>
            <person name="Preston G.M."/>
            <person name="Zhang X.-X."/>
            <person name="Moon C.D."/>
            <person name="Gehrig S.M."/>
            <person name="Godfrey S.A.C."/>
            <person name="Knight C.G."/>
            <person name="Malone J.G."/>
            <person name="Robinson Z."/>
            <person name="Spiers A.J."/>
            <person name="Harris S."/>
            <person name="Challis G.L."/>
            <person name="Yaxley A.M."/>
            <person name="Harris D."/>
            <person name="Seeger K."/>
            <person name="Murphy L."/>
            <person name="Rutter S."/>
            <person name="Squares R."/>
            <person name="Quail M.A."/>
            <person name="Saunders E."/>
            <person name="Mavromatis K."/>
            <person name="Brettin T.S."/>
            <person name="Bentley S.D."/>
            <person name="Hothersall J."/>
            <person name="Stephens E."/>
            <person name="Thomas C.M."/>
            <person name="Parkhill J."/>
            <person name="Levy S.B."/>
            <person name="Rainey P.B."/>
            <person name="Thomson N.R."/>
        </authorList>
    </citation>
    <scope>NUCLEOTIDE SEQUENCE [LARGE SCALE GENOMIC DNA]</scope>
    <source>
        <strain>Pf0-1</strain>
    </source>
</reference>
<name>EX7L_PSEPF</name>
<keyword id="KW-0963">Cytoplasm</keyword>
<keyword id="KW-0269">Exonuclease</keyword>
<keyword id="KW-0378">Hydrolase</keyword>
<keyword id="KW-0540">Nuclease</keyword>
<accession>Q3K7C5</accession>
<evidence type="ECO:0000255" key="1">
    <source>
        <dbReference type="HAMAP-Rule" id="MF_00378"/>
    </source>
</evidence>
<gene>
    <name evidence="1" type="primary">xseA</name>
    <name type="ordered locus">Pfl01_4592</name>
</gene>
<sequence length="459" mass="51326">MIKDPFARLGLDREVLTVSQLNGRARVLLEDVFSNIWVEGEISNLARPASGHVYFTLKDSGAQVRCALFRQNAARVRQALKDGLAVKVRGKVSLFEGRGDYQLILDTVEPAGDGALRLAFDALKEKLSAEGLFSAERKVPLPAHPQRIGIISSPTGAVIRDIISVFRRRAPQVQLTLIPTAVQGREATAQIVRALKLADARGFDALILARGGGSLEDLWCFNEEAVARAVDACVTPIVSAVGHETDVSISDFVADVRAPTPSAAAELLAPDSSHLIRQVESLHRRLVMRMRDRLMRDRLRLEGMTRRLRHPGERLRQQAQRLDDLDMRMRRAFERQLNTRRERLIRLETRLAGQHPGRQLALLRQRLDSLAERLPRAMNEGLKRRRLQLQSQMQTLHVVSPLATLGRGYSILLDERGNAIRNAAQTHTGQRLKARLGEGELQVRVEDNHLTPVTLSLLD</sequence>
<feature type="chain" id="PRO_0000273677" description="Exodeoxyribonuclease 7 large subunit">
    <location>
        <begin position="1"/>
        <end position="459"/>
    </location>
</feature>
<dbReference type="EC" id="3.1.11.6" evidence="1"/>
<dbReference type="EMBL" id="CP000094">
    <property type="protein sequence ID" value="ABA76329.1"/>
    <property type="molecule type" value="Genomic_DNA"/>
</dbReference>
<dbReference type="RefSeq" id="WP_007956669.1">
    <property type="nucleotide sequence ID" value="NC_007492.2"/>
</dbReference>
<dbReference type="SMR" id="Q3K7C5"/>
<dbReference type="KEGG" id="pfo:Pfl01_4592"/>
<dbReference type="eggNOG" id="COG1570">
    <property type="taxonomic scope" value="Bacteria"/>
</dbReference>
<dbReference type="HOGENOM" id="CLU_023625_3_1_6"/>
<dbReference type="Proteomes" id="UP000002704">
    <property type="component" value="Chromosome"/>
</dbReference>
<dbReference type="GO" id="GO:0005737">
    <property type="term" value="C:cytoplasm"/>
    <property type="evidence" value="ECO:0007669"/>
    <property type="project" value="UniProtKB-SubCell"/>
</dbReference>
<dbReference type="GO" id="GO:0009318">
    <property type="term" value="C:exodeoxyribonuclease VII complex"/>
    <property type="evidence" value="ECO:0007669"/>
    <property type="project" value="InterPro"/>
</dbReference>
<dbReference type="GO" id="GO:0008855">
    <property type="term" value="F:exodeoxyribonuclease VII activity"/>
    <property type="evidence" value="ECO:0007669"/>
    <property type="project" value="UniProtKB-UniRule"/>
</dbReference>
<dbReference type="GO" id="GO:0003676">
    <property type="term" value="F:nucleic acid binding"/>
    <property type="evidence" value="ECO:0007669"/>
    <property type="project" value="InterPro"/>
</dbReference>
<dbReference type="GO" id="GO:0006308">
    <property type="term" value="P:DNA catabolic process"/>
    <property type="evidence" value="ECO:0007669"/>
    <property type="project" value="UniProtKB-UniRule"/>
</dbReference>
<dbReference type="CDD" id="cd04489">
    <property type="entry name" value="ExoVII_LU_OBF"/>
    <property type="match status" value="1"/>
</dbReference>
<dbReference type="Gene3D" id="2.40.50.1010">
    <property type="match status" value="1"/>
</dbReference>
<dbReference type="HAMAP" id="MF_00378">
    <property type="entry name" value="Exonuc_7_L"/>
    <property type="match status" value="1"/>
</dbReference>
<dbReference type="InterPro" id="IPR003753">
    <property type="entry name" value="Exonuc_VII_L"/>
</dbReference>
<dbReference type="InterPro" id="IPR020579">
    <property type="entry name" value="Exonuc_VII_lsu_C"/>
</dbReference>
<dbReference type="InterPro" id="IPR025824">
    <property type="entry name" value="OB-fold_nuc-bd_dom"/>
</dbReference>
<dbReference type="NCBIfam" id="TIGR00237">
    <property type="entry name" value="xseA"/>
    <property type="match status" value="1"/>
</dbReference>
<dbReference type="PANTHER" id="PTHR30008">
    <property type="entry name" value="EXODEOXYRIBONUCLEASE 7 LARGE SUBUNIT"/>
    <property type="match status" value="1"/>
</dbReference>
<dbReference type="PANTHER" id="PTHR30008:SF0">
    <property type="entry name" value="EXODEOXYRIBONUCLEASE 7 LARGE SUBUNIT"/>
    <property type="match status" value="1"/>
</dbReference>
<dbReference type="Pfam" id="PF02601">
    <property type="entry name" value="Exonuc_VII_L"/>
    <property type="match status" value="1"/>
</dbReference>
<dbReference type="Pfam" id="PF13742">
    <property type="entry name" value="tRNA_anti_2"/>
    <property type="match status" value="1"/>
</dbReference>
<comment type="function">
    <text evidence="1">Bidirectionally degrades single-stranded DNA into large acid-insoluble oligonucleotides, which are then degraded further into small acid-soluble oligonucleotides.</text>
</comment>
<comment type="catalytic activity">
    <reaction evidence="1">
        <text>Exonucleolytic cleavage in either 5'- to 3'- or 3'- to 5'-direction to yield nucleoside 5'-phosphates.</text>
        <dbReference type="EC" id="3.1.11.6"/>
    </reaction>
</comment>
<comment type="subunit">
    <text evidence="1">Heterooligomer composed of large and small subunits.</text>
</comment>
<comment type="subcellular location">
    <subcellularLocation>
        <location evidence="1">Cytoplasm</location>
    </subcellularLocation>
</comment>
<comment type="similarity">
    <text evidence="1">Belongs to the XseA family.</text>
</comment>
<organism>
    <name type="scientific">Pseudomonas fluorescens (strain Pf0-1)</name>
    <dbReference type="NCBI Taxonomy" id="205922"/>
    <lineage>
        <taxon>Bacteria</taxon>
        <taxon>Pseudomonadati</taxon>
        <taxon>Pseudomonadota</taxon>
        <taxon>Gammaproteobacteria</taxon>
        <taxon>Pseudomonadales</taxon>
        <taxon>Pseudomonadaceae</taxon>
        <taxon>Pseudomonas</taxon>
    </lineage>
</organism>
<protein>
    <recommendedName>
        <fullName evidence="1">Exodeoxyribonuclease 7 large subunit</fullName>
        <ecNumber evidence="1">3.1.11.6</ecNumber>
    </recommendedName>
    <alternativeName>
        <fullName evidence="1">Exodeoxyribonuclease VII large subunit</fullName>
        <shortName evidence="1">Exonuclease VII large subunit</shortName>
    </alternativeName>
</protein>